<evidence type="ECO:0000255" key="1">
    <source>
        <dbReference type="HAMAP-Rule" id="MF_00101"/>
    </source>
</evidence>
<sequence>MIYGIGTDIIHIPRIEQLINKYSTKFINRILGKNEITIYQSLSIKQQTNFVAKRFAGKESVAKAIGTGITSSLLLPDIEILNNNLGKPIVYIPNAAKILLNNKKLTEYKIDISLSDDHPLAIAFTVISAST</sequence>
<keyword id="KW-0963">Cytoplasm</keyword>
<keyword id="KW-0275">Fatty acid biosynthesis</keyword>
<keyword id="KW-0276">Fatty acid metabolism</keyword>
<keyword id="KW-0444">Lipid biosynthesis</keyword>
<keyword id="KW-0443">Lipid metabolism</keyword>
<keyword id="KW-0460">Magnesium</keyword>
<keyword id="KW-0479">Metal-binding</keyword>
<keyword id="KW-1185">Reference proteome</keyword>
<keyword id="KW-0808">Transferase</keyword>
<organism>
    <name type="scientific">Orientia tsutsugamushi (strain Boryong)</name>
    <name type="common">Rickettsia tsutsugamushi</name>
    <dbReference type="NCBI Taxonomy" id="357244"/>
    <lineage>
        <taxon>Bacteria</taxon>
        <taxon>Pseudomonadati</taxon>
        <taxon>Pseudomonadota</taxon>
        <taxon>Alphaproteobacteria</taxon>
        <taxon>Rickettsiales</taxon>
        <taxon>Rickettsiaceae</taxon>
        <taxon>Rickettsieae</taxon>
        <taxon>Orientia</taxon>
    </lineage>
</organism>
<dbReference type="EC" id="2.7.8.7" evidence="1"/>
<dbReference type="EMBL" id="AM494475">
    <property type="protein sequence ID" value="CAM79984.1"/>
    <property type="molecule type" value="Genomic_DNA"/>
</dbReference>
<dbReference type="RefSeq" id="WP_011944701.1">
    <property type="nucleotide sequence ID" value="NC_009488.1"/>
</dbReference>
<dbReference type="SMR" id="A5CDM0"/>
<dbReference type="KEGG" id="ots:OTBS_0918"/>
<dbReference type="eggNOG" id="COG0736">
    <property type="taxonomic scope" value="Bacteria"/>
</dbReference>
<dbReference type="HOGENOM" id="CLU_089696_0_1_5"/>
<dbReference type="Proteomes" id="UP000001565">
    <property type="component" value="Chromosome"/>
</dbReference>
<dbReference type="GO" id="GO:0005737">
    <property type="term" value="C:cytoplasm"/>
    <property type="evidence" value="ECO:0007669"/>
    <property type="project" value="UniProtKB-SubCell"/>
</dbReference>
<dbReference type="GO" id="GO:0008897">
    <property type="term" value="F:holo-[acyl-carrier-protein] synthase activity"/>
    <property type="evidence" value="ECO:0007669"/>
    <property type="project" value="UniProtKB-UniRule"/>
</dbReference>
<dbReference type="GO" id="GO:0000287">
    <property type="term" value="F:magnesium ion binding"/>
    <property type="evidence" value="ECO:0007669"/>
    <property type="project" value="UniProtKB-UniRule"/>
</dbReference>
<dbReference type="GO" id="GO:0006633">
    <property type="term" value="P:fatty acid biosynthetic process"/>
    <property type="evidence" value="ECO:0007669"/>
    <property type="project" value="UniProtKB-UniRule"/>
</dbReference>
<dbReference type="Gene3D" id="3.90.470.20">
    <property type="entry name" value="4'-phosphopantetheinyl transferase domain"/>
    <property type="match status" value="1"/>
</dbReference>
<dbReference type="HAMAP" id="MF_00101">
    <property type="entry name" value="AcpS"/>
    <property type="match status" value="1"/>
</dbReference>
<dbReference type="InterPro" id="IPR008278">
    <property type="entry name" value="4-PPantetheinyl_Trfase_dom"/>
</dbReference>
<dbReference type="InterPro" id="IPR037143">
    <property type="entry name" value="4-PPantetheinyl_Trfase_dom_sf"/>
</dbReference>
<dbReference type="InterPro" id="IPR002582">
    <property type="entry name" value="ACPS"/>
</dbReference>
<dbReference type="InterPro" id="IPR004568">
    <property type="entry name" value="Ppantetheine-prot_Trfase_dom"/>
</dbReference>
<dbReference type="NCBIfam" id="TIGR00516">
    <property type="entry name" value="acpS"/>
    <property type="match status" value="1"/>
</dbReference>
<dbReference type="NCBIfam" id="TIGR00556">
    <property type="entry name" value="pantethn_trn"/>
    <property type="match status" value="1"/>
</dbReference>
<dbReference type="Pfam" id="PF01648">
    <property type="entry name" value="ACPS"/>
    <property type="match status" value="1"/>
</dbReference>
<dbReference type="SUPFAM" id="SSF56214">
    <property type="entry name" value="4'-phosphopantetheinyl transferase"/>
    <property type="match status" value="1"/>
</dbReference>
<comment type="function">
    <text evidence="1">Transfers the 4'-phosphopantetheine moiety from coenzyme A to a Ser of acyl-carrier-protein.</text>
</comment>
<comment type="catalytic activity">
    <reaction evidence="1">
        <text>apo-[ACP] + CoA = holo-[ACP] + adenosine 3',5'-bisphosphate + H(+)</text>
        <dbReference type="Rhea" id="RHEA:12068"/>
        <dbReference type="Rhea" id="RHEA-COMP:9685"/>
        <dbReference type="Rhea" id="RHEA-COMP:9690"/>
        <dbReference type="ChEBI" id="CHEBI:15378"/>
        <dbReference type="ChEBI" id="CHEBI:29999"/>
        <dbReference type="ChEBI" id="CHEBI:57287"/>
        <dbReference type="ChEBI" id="CHEBI:58343"/>
        <dbReference type="ChEBI" id="CHEBI:64479"/>
        <dbReference type="EC" id="2.7.8.7"/>
    </reaction>
</comment>
<comment type="cofactor">
    <cofactor evidence="1">
        <name>Mg(2+)</name>
        <dbReference type="ChEBI" id="CHEBI:18420"/>
    </cofactor>
</comment>
<comment type="subcellular location">
    <subcellularLocation>
        <location evidence="1">Cytoplasm</location>
    </subcellularLocation>
</comment>
<comment type="similarity">
    <text evidence="1">Belongs to the P-Pant transferase superfamily. AcpS family.</text>
</comment>
<name>ACPS_ORITB</name>
<gene>
    <name evidence="1" type="primary">acpS</name>
    <name type="ordered locus">OTBS_0918</name>
</gene>
<accession>A5CDM0</accession>
<reference key="1">
    <citation type="journal article" date="2007" name="Proc. Natl. Acad. Sci. U.S.A.">
        <title>The Orientia tsutsugamushi genome reveals massive proliferation of conjugative type IV secretion system and host-cell interaction genes.</title>
        <authorList>
            <person name="Cho N.-H."/>
            <person name="Kim H.-R."/>
            <person name="Lee J.-H."/>
            <person name="Kim S.-Y."/>
            <person name="Kim J."/>
            <person name="Cha S."/>
            <person name="Kim S.-Y."/>
            <person name="Darby A.C."/>
            <person name="Fuxelius H.-H."/>
            <person name="Yin J."/>
            <person name="Kim J.H."/>
            <person name="Kim J."/>
            <person name="Lee S.J."/>
            <person name="Koh Y.-S."/>
            <person name="Jang W.-J."/>
            <person name="Park K.-H."/>
            <person name="Andersson S.G.E."/>
            <person name="Choi M.-S."/>
            <person name="Kim I.-S."/>
        </authorList>
    </citation>
    <scope>NUCLEOTIDE SEQUENCE [LARGE SCALE GENOMIC DNA]</scope>
    <source>
        <strain>Boryong</strain>
    </source>
</reference>
<feature type="chain" id="PRO_1000008468" description="Holo-[acyl-carrier-protein] synthase">
    <location>
        <begin position="1"/>
        <end position="131"/>
    </location>
</feature>
<feature type="binding site" evidence="1">
    <location>
        <position position="8"/>
    </location>
    <ligand>
        <name>Mg(2+)</name>
        <dbReference type="ChEBI" id="CHEBI:18420"/>
    </ligand>
</feature>
<feature type="binding site" evidence="1">
    <location>
        <position position="59"/>
    </location>
    <ligand>
        <name>Mg(2+)</name>
        <dbReference type="ChEBI" id="CHEBI:18420"/>
    </ligand>
</feature>
<protein>
    <recommendedName>
        <fullName evidence="1">Holo-[acyl-carrier-protein] synthase</fullName>
        <shortName evidence="1">Holo-ACP synthase</shortName>
        <ecNumber evidence="1">2.7.8.7</ecNumber>
    </recommendedName>
    <alternativeName>
        <fullName evidence="1">4'-phosphopantetheinyl transferase AcpS</fullName>
    </alternativeName>
</protein>
<proteinExistence type="inferred from homology"/>